<feature type="chain" id="PRO_1000054096" description="Cyclic pyranopterin monophosphate synthase">
    <location>
        <begin position="1"/>
        <end position="162"/>
    </location>
</feature>
<feature type="active site" evidence="1">
    <location>
        <position position="130"/>
    </location>
</feature>
<feature type="binding site" evidence="1">
    <location>
        <begin position="75"/>
        <end position="77"/>
    </location>
    <ligand>
        <name>substrate</name>
    </ligand>
</feature>
<feature type="binding site" evidence="1">
    <location>
        <begin position="115"/>
        <end position="116"/>
    </location>
    <ligand>
        <name>substrate</name>
    </ligand>
</feature>
<proteinExistence type="inferred from homology"/>
<dbReference type="EC" id="4.6.1.17" evidence="1"/>
<dbReference type="EMBL" id="CP000557">
    <property type="protein sequence ID" value="ABO65600.1"/>
    <property type="molecule type" value="Genomic_DNA"/>
</dbReference>
<dbReference type="RefSeq" id="WP_008882022.1">
    <property type="nucleotide sequence ID" value="NC_009328.1"/>
</dbReference>
<dbReference type="SMR" id="A4IJU6"/>
<dbReference type="KEGG" id="gtn:GTNG_0216"/>
<dbReference type="eggNOG" id="COG0315">
    <property type="taxonomic scope" value="Bacteria"/>
</dbReference>
<dbReference type="HOGENOM" id="CLU_074693_1_1_9"/>
<dbReference type="UniPathway" id="UPA00344"/>
<dbReference type="Proteomes" id="UP000001578">
    <property type="component" value="Chromosome"/>
</dbReference>
<dbReference type="GO" id="GO:0061799">
    <property type="term" value="F:cyclic pyranopterin monophosphate synthase activity"/>
    <property type="evidence" value="ECO:0007669"/>
    <property type="project" value="UniProtKB-UniRule"/>
</dbReference>
<dbReference type="GO" id="GO:0006777">
    <property type="term" value="P:Mo-molybdopterin cofactor biosynthetic process"/>
    <property type="evidence" value="ECO:0007669"/>
    <property type="project" value="UniProtKB-UniRule"/>
</dbReference>
<dbReference type="CDD" id="cd01420">
    <property type="entry name" value="MoaC_PE"/>
    <property type="match status" value="1"/>
</dbReference>
<dbReference type="Gene3D" id="3.30.70.640">
    <property type="entry name" value="Molybdopterin cofactor biosynthesis C (MoaC) domain"/>
    <property type="match status" value="1"/>
</dbReference>
<dbReference type="HAMAP" id="MF_01224_B">
    <property type="entry name" value="MoaC_B"/>
    <property type="match status" value="1"/>
</dbReference>
<dbReference type="InterPro" id="IPR023045">
    <property type="entry name" value="MoaC"/>
</dbReference>
<dbReference type="InterPro" id="IPR047594">
    <property type="entry name" value="MoaC_bact/euk"/>
</dbReference>
<dbReference type="InterPro" id="IPR036522">
    <property type="entry name" value="MoaC_sf"/>
</dbReference>
<dbReference type="InterPro" id="IPR050105">
    <property type="entry name" value="MoCo_biosynth_MoaA/MoaC"/>
</dbReference>
<dbReference type="InterPro" id="IPR002820">
    <property type="entry name" value="Mopterin_CF_biosynth-C_dom"/>
</dbReference>
<dbReference type="NCBIfam" id="TIGR00581">
    <property type="entry name" value="moaC"/>
    <property type="match status" value="1"/>
</dbReference>
<dbReference type="NCBIfam" id="NF006870">
    <property type="entry name" value="PRK09364.1"/>
    <property type="match status" value="1"/>
</dbReference>
<dbReference type="PANTHER" id="PTHR22960:SF29">
    <property type="entry name" value="CYCLIC PYRANOPTERIN MONOPHOSPHATE SYNTHASE"/>
    <property type="match status" value="1"/>
</dbReference>
<dbReference type="PANTHER" id="PTHR22960">
    <property type="entry name" value="MOLYBDOPTERIN COFACTOR SYNTHESIS PROTEIN A"/>
    <property type="match status" value="1"/>
</dbReference>
<dbReference type="Pfam" id="PF01967">
    <property type="entry name" value="MoaC"/>
    <property type="match status" value="1"/>
</dbReference>
<dbReference type="SUPFAM" id="SSF55040">
    <property type="entry name" value="Molybdenum cofactor biosynthesis protein C, MoaC"/>
    <property type="match status" value="1"/>
</dbReference>
<comment type="function">
    <text evidence="1">Catalyzes the conversion of (8S)-3',8-cyclo-7,8-dihydroguanosine 5'-triphosphate to cyclic pyranopterin monophosphate (cPMP).</text>
</comment>
<comment type="catalytic activity">
    <reaction evidence="1">
        <text>(8S)-3',8-cyclo-7,8-dihydroguanosine 5'-triphosphate = cyclic pyranopterin phosphate + diphosphate</text>
        <dbReference type="Rhea" id="RHEA:49580"/>
        <dbReference type="ChEBI" id="CHEBI:33019"/>
        <dbReference type="ChEBI" id="CHEBI:59648"/>
        <dbReference type="ChEBI" id="CHEBI:131766"/>
        <dbReference type="EC" id="4.6.1.17"/>
    </reaction>
</comment>
<comment type="pathway">
    <text evidence="1">Cofactor biosynthesis; molybdopterin biosynthesis.</text>
</comment>
<comment type="subunit">
    <text evidence="1">Homohexamer; trimer of dimers.</text>
</comment>
<comment type="similarity">
    <text evidence="1">Belongs to the MoaC family.</text>
</comment>
<reference key="1">
    <citation type="journal article" date="2007" name="Proc. Natl. Acad. Sci. U.S.A.">
        <title>Genome and proteome of long-chain alkane degrading Geobacillus thermodenitrificans NG80-2 isolated from a deep-subsurface oil reservoir.</title>
        <authorList>
            <person name="Feng L."/>
            <person name="Wang W."/>
            <person name="Cheng J."/>
            <person name="Ren Y."/>
            <person name="Zhao G."/>
            <person name="Gao C."/>
            <person name="Tang Y."/>
            <person name="Liu X."/>
            <person name="Han W."/>
            <person name="Peng X."/>
            <person name="Liu R."/>
            <person name="Wang L."/>
        </authorList>
    </citation>
    <scope>NUCLEOTIDE SEQUENCE [LARGE SCALE GENOMIC DNA]</scope>
    <source>
        <strain>NG80-2</strain>
    </source>
</reference>
<name>MOAC_GEOTN</name>
<evidence type="ECO:0000255" key="1">
    <source>
        <dbReference type="HAMAP-Rule" id="MF_01224"/>
    </source>
</evidence>
<gene>
    <name evidence="1" type="primary">moaC</name>
    <name type="ordered locus">GTNG_0216</name>
</gene>
<organism>
    <name type="scientific">Geobacillus thermodenitrificans (strain NG80-2)</name>
    <dbReference type="NCBI Taxonomy" id="420246"/>
    <lineage>
        <taxon>Bacteria</taxon>
        <taxon>Bacillati</taxon>
        <taxon>Bacillota</taxon>
        <taxon>Bacilli</taxon>
        <taxon>Bacillales</taxon>
        <taxon>Anoxybacillaceae</taxon>
        <taxon>Geobacillus</taxon>
    </lineage>
</organism>
<keyword id="KW-0456">Lyase</keyword>
<keyword id="KW-0501">Molybdenum cofactor biosynthesis</keyword>
<protein>
    <recommendedName>
        <fullName evidence="1">Cyclic pyranopterin monophosphate synthase</fullName>
        <ecNumber evidence="1">4.6.1.17</ecNumber>
    </recommendedName>
    <alternativeName>
        <fullName evidence="1">Molybdenum cofactor biosynthesis protein C</fullName>
    </alternativeName>
</protein>
<accession>A4IJU6</accession>
<sequence length="162" mass="17514">MSSFTHFNEQGRAKMVDITNKEDTVRVAVAKTSVTVSEEIYEKMTNNAIEKGDVLAVAQVAGVMAAKKTADLIPMCHPLMLKGVDIAFSWENEADAYKLVITATVKTKGSTGVEMEALTAASVCALTVYDMCKALDKGMIIGPTYLVEKTGGKSGHYRRKTD</sequence>